<accession>O88764</accession>
<reference evidence="21" key="1">
    <citation type="journal article" date="1998" name="Oncogene">
        <title>Cloning and characterization of Dlk, a novel serine/threonine kinase that is tightly associated with chromatin and phosphorylates core histones.</title>
        <authorList>
            <person name="Koegel D."/>
            <person name="Ploettner O."/>
            <person name="Landsberg G."/>
            <person name="Christian S."/>
            <person name="Scheidtmann K.H."/>
        </authorList>
    </citation>
    <scope>NUCLEOTIDE SEQUENCE [MRNA]</scope>
    <scope>FUNCTION</scope>
    <scope>CATALYTIC ACTIVITY</scope>
    <scope>TISSUE SPECIFICITY</scope>
    <scope>SUBCELLULAR LOCATION</scope>
</reference>
<reference key="2">
    <citation type="journal article" date="2004" name="Genome Res.">
        <title>The status, quality, and expansion of the NIH full-length cDNA project: the Mammalian Gene Collection (MGC).</title>
        <authorList>
            <consortium name="The MGC Project Team"/>
        </authorList>
    </citation>
    <scope>NUCLEOTIDE SEQUENCE [LARGE SCALE MRNA]</scope>
    <source>
        <tissue>Prostate</tissue>
    </source>
</reference>
<reference key="3">
    <citation type="journal article" date="1999" name="FEBS Lett.">
        <title>AATF -- a novel transcription factor that interacts with Dlk/ZIP kinase and interferes with apoptosis.</title>
        <authorList>
            <person name="Page G."/>
            <person name="Loedige I."/>
            <person name="Kogel D."/>
            <person name="Scheidtmann K.H."/>
        </authorList>
    </citation>
    <scope>INTERACTION WITH AATF</scope>
</reference>
<reference key="4">
    <citation type="journal article" date="1999" name="Oncogene">
        <title>C-terminal truncation of Dlk/ZIP kinase leads to abrogation of nuclear transport and high apoptotic activity.</title>
        <authorList>
            <person name="Koegel D."/>
            <person name="Bierbaum H."/>
            <person name="Preuss U."/>
            <person name="Scheidtmann K.H."/>
        </authorList>
    </citation>
    <scope>SUBCELLULAR LOCATION</scope>
    <scope>MUTAGENESIS OF 406-ARG-ARG-407</scope>
</reference>
<reference evidence="21" key="5">
    <citation type="journal article" date="1999" name="Oncogene">
        <title>Interaction partners of Dlk/ZIP kinase: co-expression of Dlk/ZIP kinase and Par-4 results in cytoplasmic retention and apoptosis.</title>
        <authorList>
            <person name="Page G."/>
            <person name="Kogel D."/>
            <person name="Rangnekar V."/>
            <person name="Scheidtmann K.H."/>
        </authorList>
    </citation>
    <scope>FUNCTION IN APOPTOSIS</scope>
    <scope>CATALYTIC ACTIVITY</scope>
    <scope>INTERACTION WITH ATF4 AND PAWR</scope>
    <scope>SUBCELLULAR LOCATION</scope>
    <scope>MUTAGENESIS OF LYS-42</scope>
</reference>
<reference key="6">
    <citation type="journal article" date="2001" name="J. Biol. Chem.">
        <title>Zipper-interacting protein kinase induces Ca(2+)-free smooth muscle contraction via myosin light chain phosphorylation.</title>
        <authorList>
            <person name="Niiro N."/>
            <person name="Ikebe M."/>
        </authorList>
    </citation>
    <scope>ALTERNATIVE SPLICING (ISOFORM 2)</scope>
    <scope>FUNCTION IN PHOSPHORYLATION OF MYL12B AND PPP1R12A</scope>
    <scope>CATALYTIC ACTIVITY</scope>
</reference>
<reference key="7">
    <citation type="journal article" date="2002" name="Nucleic Acids Res.">
        <title>DAP-like kinase interacts with the rat homolog of Schizosaccharomyces pombe CDC5 protein, a factor involved in pre-mRNA splicing and required for G2/M phase transition.</title>
        <authorList>
            <person name="Engemann H."/>
            <person name="Heinzel V."/>
            <person name="Page G."/>
            <person name="Preuss U."/>
            <person name="Scheidtmann K.H."/>
        </authorList>
    </citation>
    <scope>INTERACTION WITH CDC5L</scope>
</reference>
<reference key="8">
    <citation type="journal article" date="2003" name="Eur. J. Cell Biol.">
        <title>DAP-like kinase, a member of the death-associated protein kinase family, associates with centrosomes, centromers, and the contractile ring during mitosis.</title>
        <authorList>
            <person name="Preuss U."/>
            <person name="Bierbaum H."/>
            <person name="Buchenau P."/>
            <person name="Scheidtmann K.H."/>
        </authorList>
    </citation>
    <scope>SUBCELLULAR LOCATION</scope>
</reference>
<reference key="9">
    <citation type="journal article" date="2003" name="Nucleic Acids Res.">
        <title>Novel mitosis-specific phosphorylation of histone H3 at Thr11 mediated by Dlk/ZIP kinase.</title>
        <authorList>
            <person name="Preuss U."/>
            <person name="Landsberg G."/>
            <person name="Scheidtmann K.H."/>
        </authorList>
    </citation>
    <scope>FUNCTION</scope>
    <scope>SUBCELLULAR LOCATION</scope>
</reference>
<reference key="10">
    <citation type="journal article" date="2004" name="J. Cell Biol.">
        <title>ZIP kinase is responsible for the phosphorylation of myosin II and necessary for cell motility in mammalian fibroblasts.</title>
        <authorList>
            <person name="Komatsu S."/>
            <person name="Ikebe M."/>
        </authorList>
    </citation>
    <scope>FUNCTION IN PHOSPHORYLATION OF MYL12B</scope>
    <scope>SUBCELLULAR LOCATION</scope>
    <scope>CATALYTIC ACTIVITY</scope>
</reference>
<reference key="11">
    <citation type="journal article" date="2007" name="PLoS Genet.">
        <title>ZIPK: a unique case of murine-specific divergence of a conserved vertebrate gene.</title>
        <authorList>
            <person name="Shoval Y."/>
            <person name="Pietrokovski S."/>
            <person name="Kimchi A."/>
        </authorList>
    </citation>
    <scope>SUBCELLULAR LOCATION</scope>
    <scope>INTERACTION WITH PAWR</scope>
    <scope>MUTAGENESIS OF ALA-294 AND ALA-295</scope>
</reference>
<reference key="12">
    <citation type="journal article" date="2008" name="Oncogene">
        <title>ZIP kinase plays a crucial role in androgen receptor-mediated transcription.</title>
        <authorList>
            <person name="Leister P."/>
            <person name="Felten A."/>
            <person name="Chasan A.I."/>
            <person name="Scheidtmann K.H."/>
        </authorList>
    </citation>
    <scope>FUNCTION IN ANDROGEN RECEPTOR-MEDIATED TRANSCRIPTION</scope>
    <scope>INTERACTION WITH AR</scope>
</reference>
<reference key="13">
    <citation type="journal article" date="2009" name="J. Cell. Mol. Med.">
        <title>The pro-apoptotic protein Par-4 facilitates vascular contractility by cytoskeletal targeting of ZIPK.</title>
        <authorList>
            <person name="Vetterkind S."/>
            <person name="Morgan K.G."/>
        </authorList>
    </citation>
    <scope>INTERACTION WITH PAWR</scope>
</reference>
<reference key="14">
    <citation type="journal article" date="2011" name="Cell. Signal.">
        <title>Phosphorylation-dependent control of ZIPK nuclear import is species specific.</title>
        <authorList>
            <person name="Weitzel D.H."/>
            <person name="Chambers J."/>
            <person name="Haystead T.A."/>
        </authorList>
    </citation>
    <scope>SUBCELLULAR LOCATION</scope>
</reference>
<evidence type="ECO:0000250" key="1">
    <source>
        <dbReference type="UniProtKB" id="O43293"/>
    </source>
</evidence>
<evidence type="ECO:0000250" key="2">
    <source>
        <dbReference type="UniProtKB" id="O54784"/>
    </source>
</evidence>
<evidence type="ECO:0000250" key="3">
    <source>
        <dbReference type="UniProtKB" id="O96017"/>
    </source>
</evidence>
<evidence type="ECO:0000255" key="4">
    <source>
        <dbReference type="PROSITE-ProRule" id="PRU00159"/>
    </source>
</evidence>
<evidence type="ECO:0000255" key="5">
    <source>
        <dbReference type="PROSITE-ProRule" id="PRU10027"/>
    </source>
</evidence>
<evidence type="ECO:0000269" key="6">
    <source>
    </source>
</evidence>
<evidence type="ECO:0000269" key="7">
    <source>
    </source>
</evidence>
<evidence type="ECO:0000269" key="8">
    <source>
    </source>
</evidence>
<evidence type="ECO:0000269" key="9">
    <source>
    </source>
</evidence>
<evidence type="ECO:0000269" key="10">
    <source>
    </source>
</evidence>
<evidence type="ECO:0000269" key="11">
    <source>
    </source>
</evidence>
<evidence type="ECO:0000269" key="12">
    <source>
    </source>
</evidence>
<evidence type="ECO:0000269" key="13">
    <source>
    </source>
</evidence>
<evidence type="ECO:0000269" key="14">
    <source>
    </source>
</evidence>
<evidence type="ECO:0000269" key="15">
    <source>
    </source>
</evidence>
<evidence type="ECO:0000269" key="16">
    <source>
    </source>
</evidence>
<evidence type="ECO:0000269" key="17">
    <source>
    </source>
</evidence>
<evidence type="ECO:0000269" key="18">
    <source>
    </source>
</evidence>
<evidence type="ECO:0000303" key="19">
    <source>
    </source>
</evidence>
<evidence type="ECO:0000303" key="20">
    <source>
    </source>
</evidence>
<evidence type="ECO:0000305" key="21"/>
<evidence type="ECO:0000312" key="22">
    <source>
        <dbReference type="EMBL" id="CAA07360.1"/>
    </source>
</evidence>
<protein>
    <recommendedName>
        <fullName>Death-associated protein kinase 3</fullName>
        <shortName>DAP kinase 3</shortName>
        <ecNumber evidence="8 9 13 18">2.7.11.1</ecNumber>
    </recommendedName>
    <alternativeName>
        <fullName>DAP-like kinase</fullName>
        <shortName>Dlk</shortName>
    </alternativeName>
    <alternativeName>
        <fullName>MYPT1 kinase</fullName>
    </alternativeName>
    <alternativeName>
        <fullName>ZIP-kinase</fullName>
    </alternativeName>
</protein>
<keyword id="KW-0010">Activator</keyword>
<keyword id="KW-0025">Alternative splicing</keyword>
<keyword id="KW-0053">Apoptosis</keyword>
<keyword id="KW-0067">ATP-binding</keyword>
<keyword id="KW-0137">Centromere</keyword>
<keyword id="KW-0156">Chromatin regulator</keyword>
<keyword id="KW-0158">Chromosome</keyword>
<keyword id="KW-0963">Cytoplasm</keyword>
<keyword id="KW-0206">Cytoskeleton</keyword>
<keyword id="KW-0418">Kinase</keyword>
<keyword id="KW-0547">Nucleotide-binding</keyword>
<keyword id="KW-0539">Nucleus</keyword>
<keyword id="KW-0597">Phosphoprotein</keyword>
<keyword id="KW-1185">Reference proteome</keyword>
<keyword id="KW-0723">Serine/threonine-protein kinase</keyword>
<keyword id="KW-0804">Transcription</keyword>
<keyword id="KW-0805">Transcription regulation</keyword>
<keyword id="KW-0808">Transferase</keyword>
<keyword id="KW-0832">Ubl conjugation</keyword>
<sequence>MSTFRQEDVEDHYEMGEELGSGQFAIVRKCQQKGTGMEYAAKFIKKRRLPSSRRGVSREEIEREVSILREIRHPNIITLHDVFENKTDVVLILELVSGGELFDFLAEKESLTEDEATQFLKQILDGVHYLHSKRIAHFDLKPENIMLLDKHAASPRIKLIDFGIAHRIEAGSEFKNIFGTPEFVAPEIVNYEPLGLEADMWSIGVITYILLSGASPFLGETKQETLTNISAVNYDFDEEYFSSTSELAKDFIRRLLVKDPKRRMTIAQSLEHSWIKVRRREDGARKPERRRLRAARLREYSLKSHSSMPRNTSYASFERFSRVLEDVAAAEQGLRELQRGRRQCRERVCALRVAAEQREARCRDGSAGLGRDLRRLRTELGRTEALRTRAQEEARAALLGAGGLKRRLCRLENRYDALAAQVAAEVQFVRDLVRALEQERLQAECGVR</sequence>
<organism evidence="22">
    <name type="scientific">Rattus norvegicus</name>
    <name type="common">Rat</name>
    <dbReference type="NCBI Taxonomy" id="10116"/>
    <lineage>
        <taxon>Eukaryota</taxon>
        <taxon>Metazoa</taxon>
        <taxon>Chordata</taxon>
        <taxon>Craniata</taxon>
        <taxon>Vertebrata</taxon>
        <taxon>Euteleostomi</taxon>
        <taxon>Mammalia</taxon>
        <taxon>Eutheria</taxon>
        <taxon>Euarchontoglires</taxon>
        <taxon>Glires</taxon>
        <taxon>Rodentia</taxon>
        <taxon>Myomorpha</taxon>
        <taxon>Muroidea</taxon>
        <taxon>Muridae</taxon>
        <taxon>Murinae</taxon>
        <taxon>Rattus</taxon>
    </lineage>
</organism>
<comment type="function">
    <text evidence="1 2 8 9 11 13 15 18">Serine/threonine kinase which is involved in the regulation of apoptosis, autophagy, transcription, translation and actin cytoskeleton reorganization. Regulates both type I (caspase-dependent) apoptotic and type II (caspase-independent) autophagic cell deaths signal, depending on the cellular setting. Involved in formation of promyelocytic leukemia protein nuclear body (PML-NB). Involved in apoptosis involving PAWR which mediates cytoplasmic relocation; in vitro phosphorylates PAWR. Regulates myosin phosphorylation in both smooth muscle and non-muscle cells. In smooth muscle, regulates myosin either directly by phosphorylating MYL12B and MYL9 or through inhibition of smooth muscle myosin phosphatase (SMPP1M) via phosphorylation of PPP1R12A; the inhibition of SMPP1M functions to enhance muscle responsiveness to Ca(2+) and promote a contractile state. Phosphorylates MYL12B in non-muscle cells leading to reorganization of actin cytoskeleton such as in regulation of cell polarity and cell migration. Positively regulates canonical Wnt/beta-catenin signaling through interaction with NLK and TCF7L2; disrupts the NLK-TCF7L2 complex thereby influencing the phosphorylation of TCF7L2 by NLK. Phosphorylates RPL13A on 'Ser-77' upon interferon-gamma activation which is causing RPL13A release from the ribosome, RPL13A association with the GAIT complex and its subsequent involvement in transcript-selective translation inhibition (By similarity). Phosphorylates STAT3 and enhances its transcriptional activity (By similarity). Enhances transcription from AR-responsive promoters in a hormone- and kinase-dependent manner. Phosphorylates histone H3 on 'Thr-11' at centromeres during mitosis.</text>
</comment>
<comment type="catalytic activity">
    <reaction evidence="8 9 13 18">
        <text>L-seryl-[protein] + ATP = O-phospho-L-seryl-[protein] + ADP + H(+)</text>
        <dbReference type="Rhea" id="RHEA:17989"/>
        <dbReference type="Rhea" id="RHEA-COMP:9863"/>
        <dbReference type="Rhea" id="RHEA-COMP:11604"/>
        <dbReference type="ChEBI" id="CHEBI:15378"/>
        <dbReference type="ChEBI" id="CHEBI:29999"/>
        <dbReference type="ChEBI" id="CHEBI:30616"/>
        <dbReference type="ChEBI" id="CHEBI:83421"/>
        <dbReference type="ChEBI" id="CHEBI:456216"/>
        <dbReference type="EC" id="2.7.11.1"/>
    </reaction>
</comment>
<comment type="catalytic activity">
    <reaction evidence="8 9 13 18">
        <text>L-threonyl-[protein] + ATP = O-phospho-L-threonyl-[protein] + ADP + H(+)</text>
        <dbReference type="Rhea" id="RHEA:46608"/>
        <dbReference type="Rhea" id="RHEA-COMP:11060"/>
        <dbReference type="Rhea" id="RHEA-COMP:11605"/>
        <dbReference type="ChEBI" id="CHEBI:15378"/>
        <dbReference type="ChEBI" id="CHEBI:30013"/>
        <dbReference type="ChEBI" id="CHEBI:30616"/>
        <dbReference type="ChEBI" id="CHEBI:61977"/>
        <dbReference type="ChEBI" id="CHEBI:456216"/>
        <dbReference type="EC" id="2.7.11.1"/>
    </reaction>
</comment>
<comment type="cofactor">
    <cofactor evidence="8 18">
        <name>Mg(2+)</name>
        <dbReference type="ChEBI" id="CHEBI:18420"/>
    </cofactor>
</comment>
<comment type="activity regulation">
    <text evidence="1">A sequential activation is proposed: autophosphorylation at consensus sites is leading to dimerization of the catalytic domain and activation segment exchange (producing an active confirmation of both kinase modules in trans) followed by phosphorylation at Thr-180 in the activation segment and at other regulatory sites (Probable). Phosphorylation at Thr-180, Thr-225 and Thr-265 is essential for activity. Inhibited by pyridone 6 (K00225), a potent, ATP-competitive inhibitor. Phosphorylation at Thr-180, Thr-225 and Thr-265 is essential for activity (By similarity).</text>
</comment>
<comment type="subunit">
    <text evidence="1 6 8 10 14 15 16">Homooligomer in its kinase-active form (homotrimers and homodimers are reported); monomeric in its kinase-inactive form. Homodimerization is required for activation segment autophosphorylation (By similarity). Interacts with DAXX, ATF4, NLK, TCF7L2, UBE2D1, UBE2D2, UBE2D3 and CDC5L. Interacts with PAWR; also demonstrated in aorta smooth muscle cells indicative for the cytoskeletal targeting function of PAWR. Interacts with AR; enhanced by AATF. Interacts with LUZP1; the interaction is likely to occur throughout the cell cycle and reduces the LUZP1-mediated suppression of MYL9 phosphorylation (By similarity).</text>
</comment>
<comment type="interaction">
    <interactant intactId="EBI-4404236">
        <id>O88764</id>
    </interactant>
    <interactant intactId="EBI-1187240">
        <id>Q62627</id>
        <label>Pawr</label>
    </interactant>
    <organismsDiffer>false</organismsDiffer>
    <experiments>5</experiments>
</comment>
<comment type="subcellular location">
    <subcellularLocation>
        <location evidence="7 8 14 17 18">Nucleus</location>
    </subcellularLocation>
    <subcellularLocation>
        <location evidence="7">Nucleus</location>
        <location evidence="7">PML body</location>
    </subcellularLocation>
    <subcellularLocation>
        <location evidence="20">Cytoplasm</location>
    </subcellularLocation>
    <subcellularLocation>
        <location evidence="12">Cytoplasm</location>
        <location evidence="12">Cytoskeleton</location>
        <location evidence="12">Microtubule organizing center</location>
    </subcellularLocation>
    <subcellularLocation>
        <location evidence="11 12">Chromosome</location>
        <location evidence="11 12">Centromere</location>
    </subcellularLocation>
    <subcellularLocation>
        <location evidence="13">Cytoplasm</location>
        <location evidence="13">Cytoskeleton</location>
    </subcellularLocation>
    <subcellularLocation>
        <location evidence="1">Cytoplasm</location>
        <location evidence="1">Cytoskeleton</location>
        <location evidence="1">Spindle</location>
    </subcellularLocation>
    <subcellularLocation>
        <location evidence="1">Midbody</location>
    </subcellularLocation>
    <text evidence="12 14 19">Predominantly localized to the nucleus. Relocates to the cytoplasm on binding PAWR where the complex appears to interact with actin filaments (Probable). Associated with the centrosomes throughout the mitotic cell cycle, with the centromeres from prophase to anaphase and with the contractile ring during cytokinesis.</text>
</comment>
<comment type="alternative products">
    <event type="alternative splicing"/>
    <isoform>
        <id>O88764-1</id>
        <name>1</name>
        <sequence type="displayed"/>
    </isoform>
    <isoform>
        <id>O88764-2</id>
        <name>2</name>
        <sequence type="described" ref="VSP_042061"/>
    </isoform>
</comment>
<comment type="tissue specificity">
    <text evidence="18">Ubiquitously expressed in all tissue types examined. High levels in brain, heart, lung and spleen, lower expression in kidney, liver, skeletal muscle and testis. Isoform 2 is expressed in the smooth muscle.</text>
</comment>
<comment type="PTM">
    <text evidence="2">Ubiquitinated. Ubiquitination mediated by the UBE2D3 E3 ligase does not lead to proteasomal degradation, but influences promyelocytic leukemia protein nuclear bodies (PML-NBs) formation in the nucleus (By similarity).</text>
</comment>
<comment type="PTM">
    <text evidence="1">The phosphorylation status is critical for kinase activity, oligomerization and intracellular localization. Phosphorylation at Thr-180, Thr-225 and Thr-265 is essential for activity. The phosphorylated form is localized in the cytoplasm and nuclear translocation or retention is maximal when it is not phosphorylated. Phosphorylation increases the trimeric form, and its dephosphorylation favors a kinase-inactive monomeric form.</text>
</comment>
<comment type="miscellaneous">
    <text evidence="20">A species-specific loss of a key phosphorylation site in murine DAPK3 seems to direct it mainly to the nucleus which is proposed to be compensated by the interaction with PAWR to maintain at least the cytoplasmic basic membrane blebbing function in the apoptosis pathway.</text>
</comment>
<comment type="similarity">
    <text evidence="21">Belongs to the protein kinase superfamily. CAMK Ser/Thr protein kinase family. DAP kinase subfamily.</text>
</comment>
<gene>
    <name type="primary">Dapk3</name>
    <name type="synonym">Zipk</name>
</gene>
<dbReference type="EC" id="2.7.11.1" evidence="8 9 13 18"/>
<dbReference type="EMBL" id="AJ006971">
    <property type="protein sequence ID" value="CAA07360.1"/>
    <property type="molecule type" value="mRNA"/>
</dbReference>
<dbReference type="EMBL" id="BC062076">
    <property type="protein sequence ID" value="AAH62076.1"/>
    <property type="molecule type" value="mRNA"/>
</dbReference>
<dbReference type="RefSeq" id="NP_071991.1">
    <molecule id="O88764-1"/>
    <property type="nucleotide sequence ID" value="NM_022546.2"/>
</dbReference>
<dbReference type="RefSeq" id="XP_006241055.1">
    <molecule id="O88764-1"/>
    <property type="nucleotide sequence ID" value="XM_006240993.4"/>
</dbReference>
<dbReference type="RefSeq" id="XP_017450587.1">
    <property type="nucleotide sequence ID" value="XM_017595098.1"/>
</dbReference>
<dbReference type="RefSeq" id="XP_017450588.1">
    <molecule id="O88764-1"/>
    <property type="nucleotide sequence ID" value="XM_017595099.3"/>
</dbReference>
<dbReference type="RefSeq" id="XP_038935784.1">
    <molecule id="O88764-1"/>
    <property type="nucleotide sequence ID" value="XM_039079856.2"/>
</dbReference>
<dbReference type="SMR" id="O88764"/>
<dbReference type="BioGRID" id="249061">
    <property type="interactions" value="6"/>
</dbReference>
<dbReference type="FunCoup" id="O88764">
    <property type="interactions" value="1157"/>
</dbReference>
<dbReference type="IntAct" id="O88764">
    <property type="interactions" value="5"/>
</dbReference>
<dbReference type="STRING" id="10116.ENSRNOP00000027634"/>
<dbReference type="PhosphoSitePlus" id="O88764"/>
<dbReference type="jPOST" id="O88764"/>
<dbReference type="PaxDb" id="10116-ENSRNOP00000027634"/>
<dbReference type="Ensembl" id="ENSRNOT00000027634.5">
    <molecule id="O88764-1"/>
    <property type="protein sequence ID" value="ENSRNOP00000027634.5"/>
    <property type="gene ID" value="ENSRNOG00000020383.6"/>
</dbReference>
<dbReference type="GeneID" id="64391"/>
<dbReference type="KEGG" id="rno:64391"/>
<dbReference type="UCSC" id="RGD:621766">
    <molecule id="O88764-1"/>
    <property type="organism name" value="rat"/>
</dbReference>
<dbReference type="AGR" id="RGD:621766"/>
<dbReference type="CTD" id="1613"/>
<dbReference type="RGD" id="621766">
    <property type="gene designation" value="Dapk3"/>
</dbReference>
<dbReference type="eggNOG" id="KOG0032">
    <property type="taxonomic scope" value="Eukaryota"/>
</dbReference>
<dbReference type="GeneTree" id="ENSGT00940000161753"/>
<dbReference type="HOGENOM" id="CLU_000288_63_55_1"/>
<dbReference type="InParanoid" id="O88764"/>
<dbReference type="OMA" id="LWYKEEN"/>
<dbReference type="PhylomeDB" id="O88764"/>
<dbReference type="TreeFam" id="TF314166"/>
<dbReference type="PRO" id="PR:O88764"/>
<dbReference type="Proteomes" id="UP000002494">
    <property type="component" value="Chromosome 7"/>
</dbReference>
<dbReference type="Bgee" id="ENSRNOG00000020383">
    <property type="expression patterns" value="Expressed in pancreas and 20 other cell types or tissues"/>
</dbReference>
<dbReference type="GO" id="GO:0005884">
    <property type="term" value="C:actin filament"/>
    <property type="evidence" value="ECO:0000314"/>
    <property type="project" value="RGD"/>
</dbReference>
<dbReference type="GO" id="GO:0000775">
    <property type="term" value="C:chromosome, centromeric region"/>
    <property type="evidence" value="ECO:0000250"/>
    <property type="project" value="UniProtKB"/>
</dbReference>
<dbReference type="GO" id="GO:0005737">
    <property type="term" value="C:cytoplasm"/>
    <property type="evidence" value="ECO:0000318"/>
    <property type="project" value="GO_Central"/>
</dbReference>
<dbReference type="GO" id="GO:0045121">
    <property type="term" value="C:membrane raft"/>
    <property type="evidence" value="ECO:0000314"/>
    <property type="project" value="UniProtKB"/>
</dbReference>
<dbReference type="GO" id="GO:0005815">
    <property type="term" value="C:microtubule organizing center"/>
    <property type="evidence" value="ECO:0007669"/>
    <property type="project" value="UniProtKB-SubCell"/>
</dbReference>
<dbReference type="GO" id="GO:0030496">
    <property type="term" value="C:midbody"/>
    <property type="evidence" value="ECO:0000250"/>
    <property type="project" value="UniProtKB"/>
</dbReference>
<dbReference type="GO" id="GO:0005634">
    <property type="term" value="C:nucleus"/>
    <property type="evidence" value="ECO:0000314"/>
    <property type="project" value="UniProtKB"/>
</dbReference>
<dbReference type="GO" id="GO:0016605">
    <property type="term" value="C:PML body"/>
    <property type="evidence" value="ECO:0000266"/>
    <property type="project" value="RGD"/>
</dbReference>
<dbReference type="GO" id="GO:0005819">
    <property type="term" value="C:spindle"/>
    <property type="evidence" value="ECO:0000250"/>
    <property type="project" value="UniProtKB"/>
</dbReference>
<dbReference type="GO" id="GO:0005524">
    <property type="term" value="F:ATP binding"/>
    <property type="evidence" value="ECO:0000314"/>
    <property type="project" value="UniProtKB"/>
</dbReference>
<dbReference type="GO" id="GO:0140297">
    <property type="term" value="F:DNA-binding transcription factor binding"/>
    <property type="evidence" value="ECO:0000353"/>
    <property type="project" value="RGD"/>
</dbReference>
<dbReference type="GO" id="GO:0042802">
    <property type="term" value="F:identical protein binding"/>
    <property type="evidence" value="ECO:0000266"/>
    <property type="project" value="RGD"/>
</dbReference>
<dbReference type="GO" id="GO:0016301">
    <property type="term" value="F:kinase activity"/>
    <property type="evidence" value="ECO:0000314"/>
    <property type="project" value="RGD"/>
</dbReference>
<dbReference type="GO" id="GO:0043522">
    <property type="term" value="F:leucine zipper domain binding"/>
    <property type="evidence" value="ECO:0000266"/>
    <property type="project" value="RGD"/>
</dbReference>
<dbReference type="GO" id="GO:0042803">
    <property type="term" value="F:protein homodimerization activity"/>
    <property type="evidence" value="ECO:0000250"/>
    <property type="project" value="UniProtKB"/>
</dbReference>
<dbReference type="GO" id="GO:0004672">
    <property type="term" value="F:protein kinase activity"/>
    <property type="evidence" value="ECO:0000266"/>
    <property type="project" value="RGD"/>
</dbReference>
<dbReference type="GO" id="GO:0106310">
    <property type="term" value="F:protein serine kinase activity"/>
    <property type="evidence" value="ECO:0007669"/>
    <property type="project" value="RHEA"/>
</dbReference>
<dbReference type="GO" id="GO:0004674">
    <property type="term" value="F:protein serine/threonine kinase activity"/>
    <property type="evidence" value="ECO:0000314"/>
    <property type="project" value="UniProtKB"/>
</dbReference>
<dbReference type="GO" id="GO:0031267">
    <property type="term" value="F:small GTPase binding"/>
    <property type="evidence" value="ECO:0000266"/>
    <property type="project" value="RGD"/>
</dbReference>
<dbReference type="GO" id="GO:0006915">
    <property type="term" value="P:apoptotic process"/>
    <property type="evidence" value="ECO:0000315"/>
    <property type="project" value="UniProtKB"/>
</dbReference>
<dbReference type="GO" id="GO:0097190">
    <property type="term" value="P:apoptotic signaling pathway"/>
    <property type="evidence" value="ECO:0000266"/>
    <property type="project" value="RGD"/>
</dbReference>
<dbReference type="GO" id="GO:0071346">
    <property type="term" value="P:cellular response to type II interferon"/>
    <property type="evidence" value="ECO:0000266"/>
    <property type="project" value="RGD"/>
</dbReference>
<dbReference type="GO" id="GO:0006325">
    <property type="term" value="P:chromatin organization"/>
    <property type="evidence" value="ECO:0007669"/>
    <property type="project" value="UniProtKB-KW"/>
</dbReference>
<dbReference type="GO" id="GO:0035556">
    <property type="term" value="P:intracellular signal transduction"/>
    <property type="evidence" value="ECO:0000314"/>
    <property type="project" value="UniProtKB"/>
</dbReference>
<dbReference type="GO" id="GO:0017148">
    <property type="term" value="P:negative regulation of translation"/>
    <property type="evidence" value="ECO:0000266"/>
    <property type="project" value="RGD"/>
</dbReference>
<dbReference type="GO" id="GO:0030182">
    <property type="term" value="P:neuron differentiation"/>
    <property type="evidence" value="ECO:0000270"/>
    <property type="project" value="RGD"/>
</dbReference>
<dbReference type="GO" id="GO:0043065">
    <property type="term" value="P:positive regulation of apoptotic process"/>
    <property type="evidence" value="ECO:0000314"/>
    <property type="project" value="RGD"/>
</dbReference>
<dbReference type="GO" id="GO:0090263">
    <property type="term" value="P:positive regulation of canonical Wnt signaling pathway"/>
    <property type="evidence" value="ECO:0000266"/>
    <property type="project" value="RGD"/>
</dbReference>
<dbReference type="GO" id="GO:0030335">
    <property type="term" value="P:positive regulation of cell migration"/>
    <property type="evidence" value="ECO:0000266"/>
    <property type="project" value="RGD"/>
</dbReference>
<dbReference type="GO" id="GO:2001241">
    <property type="term" value="P:positive regulation of extrinsic apoptotic signaling pathway in absence of ligand"/>
    <property type="evidence" value="ECO:0000315"/>
    <property type="project" value="UniProtKB"/>
</dbReference>
<dbReference type="GO" id="GO:0046777">
    <property type="term" value="P:protein autophosphorylation"/>
    <property type="evidence" value="ECO:0000250"/>
    <property type="project" value="UniProtKB"/>
</dbReference>
<dbReference type="GO" id="GO:0032956">
    <property type="term" value="P:regulation of actin cytoskeleton organization"/>
    <property type="evidence" value="ECO:0000266"/>
    <property type="project" value="RGD"/>
</dbReference>
<dbReference type="GO" id="GO:0008360">
    <property type="term" value="P:regulation of cell shape"/>
    <property type="evidence" value="ECO:0000266"/>
    <property type="project" value="RGD"/>
</dbReference>
<dbReference type="GO" id="GO:0051893">
    <property type="term" value="P:regulation of focal adhesion assembly"/>
    <property type="evidence" value="ECO:0000266"/>
    <property type="project" value="RGD"/>
</dbReference>
<dbReference type="GO" id="GO:0007346">
    <property type="term" value="P:regulation of mitotic cell cycle"/>
    <property type="evidence" value="ECO:0000266"/>
    <property type="project" value="RGD"/>
</dbReference>
<dbReference type="GO" id="GO:0043519">
    <property type="term" value="P:regulation of myosin II filament organization"/>
    <property type="evidence" value="ECO:0000266"/>
    <property type="project" value="RGD"/>
</dbReference>
<dbReference type="CDD" id="cd14105">
    <property type="entry name" value="STKc_DAPK"/>
    <property type="match status" value="1"/>
</dbReference>
<dbReference type="FunFam" id="3.30.200.20:FF:000110">
    <property type="entry name" value="Death-associated kinase 3, isoform CRA_a"/>
    <property type="match status" value="1"/>
</dbReference>
<dbReference type="FunFam" id="1.10.510.10:FF:000250">
    <property type="entry name" value="Death-associated protein kinase 3"/>
    <property type="match status" value="1"/>
</dbReference>
<dbReference type="Gene3D" id="3.30.200.20">
    <property type="entry name" value="Phosphorylase Kinase, domain 1"/>
    <property type="match status" value="1"/>
</dbReference>
<dbReference type="Gene3D" id="1.10.510.10">
    <property type="entry name" value="Transferase(Phosphotransferase) domain 1"/>
    <property type="match status" value="1"/>
</dbReference>
<dbReference type="InterPro" id="IPR042870">
    <property type="entry name" value="DAPK3_STKc"/>
</dbReference>
<dbReference type="InterPro" id="IPR011009">
    <property type="entry name" value="Kinase-like_dom_sf"/>
</dbReference>
<dbReference type="InterPro" id="IPR000719">
    <property type="entry name" value="Prot_kinase_dom"/>
</dbReference>
<dbReference type="InterPro" id="IPR017441">
    <property type="entry name" value="Protein_kinase_ATP_BS"/>
</dbReference>
<dbReference type="InterPro" id="IPR008271">
    <property type="entry name" value="Ser/Thr_kinase_AS"/>
</dbReference>
<dbReference type="PANTHER" id="PTHR24342:SF18">
    <property type="entry name" value="DEATH-ASSOCIATED PROTEIN KINASE 3"/>
    <property type="match status" value="1"/>
</dbReference>
<dbReference type="PANTHER" id="PTHR24342">
    <property type="entry name" value="SERINE/THREONINE-PROTEIN KINASE 17"/>
    <property type="match status" value="1"/>
</dbReference>
<dbReference type="Pfam" id="PF00069">
    <property type="entry name" value="Pkinase"/>
    <property type="match status" value="1"/>
</dbReference>
<dbReference type="SMART" id="SM00220">
    <property type="entry name" value="S_TKc"/>
    <property type="match status" value="1"/>
</dbReference>
<dbReference type="SUPFAM" id="SSF56112">
    <property type="entry name" value="Protein kinase-like (PK-like)"/>
    <property type="match status" value="1"/>
</dbReference>
<dbReference type="PROSITE" id="PS00107">
    <property type="entry name" value="PROTEIN_KINASE_ATP"/>
    <property type="match status" value="1"/>
</dbReference>
<dbReference type="PROSITE" id="PS50011">
    <property type="entry name" value="PROTEIN_KINASE_DOM"/>
    <property type="match status" value="1"/>
</dbReference>
<dbReference type="PROSITE" id="PS00108">
    <property type="entry name" value="PROTEIN_KINASE_ST"/>
    <property type="match status" value="1"/>
</dbReference>
<name>DAPK3_RAT</name>
<feature type="chain" id="PRO_0000085916" description="Death-associated protein kinase 3">
    <location>
        <begin position="1"/>
        <end position="448"/>
    </location>
</feature>
<feature type="domain" description="Protein kinase" evidence="4">
    <location>
        <begin position="13"/>
        <end position="275"/>
    </location>
</feature>
<feature type="region of interest" description="Activation segment" evidence="3">
    <location>
        <begin position="161"/>
        <end position="204"/>
    </location>
</feature>
<feature type="region of interest" description="Interaction with CDC5L" evidence="10">
    <location>
        <begin position="390"/>
        <end position="448"/>
    </location>
</feature>
<feature type="region of interest" description="Required for interaction with ATF4 but not with PAWR" evidence="8">
    <location>
        <begin position="418"/>
        <end position="448"/>
    </location>
</feature>
<feature type="region of interest" description="Leucine-zipper" evidence="1">
    <location>
        <begin position="422"/>
        <end position="436"/>
    </location>
</feature>
<feature type="active site" description="Proton acceptor" evidence="4 5">
    <location>
        <position position="139"/>
    </location>
</feature>
<feature type="binding site" evidence="4">
    <location>
        <begin position="19"/>
        <end position="27"/>
    </location>
    <ligand>
        <name>ATP</name>
        <dbReference type="ChEBI" id="CHEBI:30616"/>
    </ligand>
</feature>
<feature type="binding site" evidence="21">
    <location>
        <position position="42"/>
    </location>
    <ligand>
        <name>ATP</name>
        <dbReference type="ChEBI" id="CHEBI:30616"/>
    </ligand>
</feature>
<feature type="modified residue" description="Phosphothreonine" evidence="1">
    <location>
        <position position="180"/>
    </location>
</feature>
<feature type="modified residue" description="Phosphothreonine" evidence="1">
    <location>
        <position position="225"/>
    </location>
</feature>
<feature type="modified residue" description="Phosphothreonine; by autocatalysis" evidence="1">
    <location>
        <position position="265"/>
    </location>
</feature>
<feature type="modified residue" description="Phosphothreonine; by ROCK1" evidence="1">
    <location>
        <position position="265"/>
    </location>
</feature>
<feature type="modified residue" description="Phosphoserine; by DAPK1" evidence="1">
    <location>
        <position position="304"/>
    </location>
</feature>
<feature type="modified residue" description="Phosphoserine; by autocatalysis and DAPK1" evidence="1">
    <location>
        <position position="306"/>
    </location>
</feature>
<feature type="modified residue" description="Phosphoserine; by DAPK1" evidence="1">
    <location>
        <position position="307"/>
    </location>
</feature>
<feature type="modified residue" description="Phosphoserine; by DAPK1" evidence="1">
    <location>
        <position position="313"/>
    </location>
</feature>
<feature type="modified residue" description="Phosphoserine; by DAPK1" evidence="1">
    <location>
        <position position="321"/>
    </location>
</feature>
<feature type="splice variant" id="VSP_042061" description="In isoform 2." evidence="21">
    <original>M</original>
    <variation>MIDSSCVPRILQKDSAMM</variation>
    <location>
        <position position="1"/>
    </location>
</feature>
<feature type="mutagenesis site" description="Loss of kinase activity, loss of PAWR-linked translocation into the cytoplasm; maintains nuclear localization but loss of localization to PML-NB." evidence="7 8">
    <original>K</original>
    <variation>A</variation>
    <location>
        <position position="42"/>
    </location>
</feature>
<feature type="mutagenesis site" description="Causes dissociation from promyelocytic leukemia oncogenic bodies and increased blebbing-inducing potency; when associated with T-300." evidence="14">
    <original>A</original>
    <variation>T</variation>
    <location>
        <position position="294"/>
    </location>
</feature>
<feature type="mutagenesis site" description="Causes dissociation from promyelocytic leukemia oncogenic bodies and increased blebbing-inducing potency; when associated with T-299." evidence="14">
    <original>A</original>
    <variation>T</variation>
    <location>
        <position position="295"/>
    </location>
</feature>
<feature type="mutagenesis site" description="Cytoplasmic localization." evidence="7">
    <original>RR</original>
    <variation>AL</variation>
    <location>
        <begin position="406"/>
        <end position="407"/>
    </location>
</feature>
<proteinExistence type="evidence at protein level"/>